<name>FOLD1_STRAW</name>
<keyword id="KW-0028">Amino-acid biosynthesis</keyword>
<keyword id="KW-0368">Histidine biosynthesis</keyword>
<keyword id="KW-0378">Hydrolase</keyword>
<keyword id="KW-0486">Methionine biosynthesis</keyword>
<keyword id="KW-0511">Multifunctional enzyme</keyword>
<keyword id="KW-0521">NADP</keyword>
<keyword id="KW-0554">One-carbon metabolism</keyword>
<keyword id="KW-0560">Oxidoreductase</keyword>
<keyword id="KW-0658">Purine biosynthesis</keyword>
<keyword id="KW-1185">Reference proteome</keyword>
<dbReference type="EC" id="1.5.1.5" evidence="1"/>
<dbReference type="EC" id="3.5.4.9" evidence="1"/>
<dbReference type="EMBL" id="BA000030">
    <property type="protein sequence ID" value="BAC68253.1"/>
    <property type="molecule type" value="Genomic_DNA"/>
</dbReference>
<dbReference type="RefSeq" id="WP_010981982.1">
    <property type="nucleotide sequence ID" value="NZ_JZJK01000088.1"/>
</dbReference>
<dbReference type="SMR" id="Q82QG3"/>
<dbReference type="GeneID" id="41537685"/>
<dbReference type="KEGG" id="sma:SAVERM_543"/>
<dbReference type="eggNOG" id="COG0190">
    <property type="taxonomic scope" value="Bacteria"/>
</dbReference>
<dbReference type="HOGENOM" id="CLU_034045_2_1_11"/>
<dbReference type="OrthoDB" id="9803580at2"/>
<dbReference type="UniPathway" id="UPA00193"/>
<dbReference type="Proteomes" id="UP000000428">
    <property type="component" value="Chromosome"/>
</dbReference>
<dbReference type="GO" id="GO:0005829">
    <property type="term" value="C:cytosol"/>
    <property type="evidence" value="ECO:0007669"/>
    <property type="project" value="TreeGrafter"/>
</dbReference>
<dbReference type="GO" id="GO:0004477">
    <property type="term" value="F:methenyltetrahydrofolate cyclohydrolase activity"/>
    <property type="evidence" value="ECO:0007669"/>
    <property type="project" value="UniProtKB-UniRule"/>
</dbReference>
<dbReference type="GO" id="GO:0004488">
    <property type="term" value="F:methylenetetrahydrofolate dehydrogenase (NADP+) activity"/>
    <property type="evidence" value="ECO:0007669"/>
    <property type="project" value="UniProtKB-UniRule"/>
</dbReference>
<dbReference type="GO" id="GO:0000105">
    <property type="term" value="P:L-histidine biosynthetic process"/>
    <property type="evidence" value="ECO:0007669"/>
    <property type="project" value="UniProtKB-KW"/>
</dbReference>
<dbReference type="GO" id="GO:0009086">
    <property type="term" value="P:methionine biosynthetic process"/>
    <property type="evidence" value="ECO:0007669"/>
    <property type="project" value="UniProtKB-KW"/>
</dbReference>
<dbReference type="GO" id="GO:0006164">
    <property type="term" value="P:purine nucleotide biosynthetic process"/>
    <property type="evidence" value="ECO:0007669"/>
    <property type="project" value="UniProtKB-KW"/>
</dbReference>
<dbReference type="GO" id="GO:0035999">
    <property type="term" value="P:tetrahydrofolate interconversion"/>
    <property type="evidence" value="ECO:0007669"/>
    <property type="project" value="UniProtKB-UniRule"/>
</dbReference>
<dbReference type="CDD" id="cd01080">
    <property type="entry name" value="NAD_bind_m-THF_DH_Cyclohyd"/>
    <property type="match status" value="1"/>
</dbReference>
<dbReference type="FunFam" id="3.40.50.720:FF:000094">
    <property type="entry name" value="Bifunctional protein FolD"/>
    <property type="match status" value="1"/>
</dbReference>
<dbReference type="FunFam" id="3.40.50.10860:FF:000005">
    <property type="entry name" value="C-1-tetrahydrofolate synthase, cytoplasmic, putative"/>
    <property type="match status" value="1"/>
</dbReference>
<dbReference type="Gene3D" id="3.40.50.10860">
    <property type="entry name" value="Leucine Dehydrogenase, chain A, domain 1"/>
    <property type="match status" value="1"/>
</dbReference>
<dbReference type="Gene3D" id="3.40.50.720">
    <property type="entry name" value="NAD(P)-binding Rossmann-like Domain"/>
    <property type="match status" value="1"/>
</dbReference>
<dbReference type="HAMAP" id="MF_01576">
    <property type="entry name" value="THF_DHG_CYH"/>
    <property type="match status" value="1"/>
</dbReference>
<dbReference type="InterPro" id="IPR046346">
    <property type="entry name" value="Aminoacid_DH-like_N_sf"/>
</dbReference>
<dbReference type="InterPro" id="IPR036291">
    <property type="entry name" value="NAD(P)-bd_dom_sf"/>
</dbReference>
<dbReference type="InterPro" id="IPR000672">
    <property type="entry name" value="THF_DH/CycHdrlase"/>
</dbReference>
<dbReference type="InterPro" id="IPR020630">
    <property type="entry name" value="THF_DH/CycHdrlase_cat_dom"/>
</dbReference>
<dbReference type="InterPro" id="IPR020867">
    <property type="entry name" value="THF_DH/CycHdrlase_CS"/>
</dbReference>
<dbReference type="InterPro" id="IPR020631">
    <property type="entry name" value="THF_DH/CycHdrlase_NAD-bd_dom"/>
</dbReference>
<dbReference type="PANTHER" id="PTHR48099:SF5">
    <property type="entry name" value="C-1-TETRAHYDROFOLATE SYNTHASE, CYTOPLASMIC"/>
    <property type="match status" value="1"/>
</dbReference>
<dbReference type="PANTHER" id="PTHR48099">
    <property type="entry name" value="C-1-TETRAHYDROFOLATE SYNTHASE, CYTOPLASMIC-RELATED"/>
    <property type="match status" value="1"/>
</dbReference>
<dbReference type="Pfam" id="PF00763">
    <property type="entry name" value="THF_DHG_CYH"/>
    <property type="match status" value="1"/>
</dbReference>
<dbReference type="Pfam" id="PF02882">
    <property type="entry name" value="THF_DHG_CYH_C"/>
    <property type="match status" value="1"/>
</dbReference>
<dbReference type="PRINTS" id="PR00085">
    <property type="entry name" value="THFDHDRGNASE"/>
</dbReference>
<dbReference type="SUPFAM" id="SSF53223">
    <property type="entry name" value="Aminoacid dehydrogenase-like, N-terminal domain"/>
    <property type="match status" value="1"/>
</dbReference>
<dbReference type="SUPFAM" id="SSF51735">
    <property type="entry name" value="NAD(P)-binding Rossmann-fold domains"/>
    <property type="match status" value="1"/>
</dbReference>
<dbReference type="PROSITE" id="PS00767">
    <property type="entry name" value="THF_DHG_CYH_2"/>
    <property type="match status" value="1"/>
</dbReference>
<accession>Q82QG3</accession>
<sequence>MSATQTAQLMDGTGHARRIVEEAAAKAAEISQRTGTAPCLATVLVGDDPASVTYVRMKRARCAKAGIRSRHIALPATTTTAELIDSLSGLSGDPEVHGILLQHPCGPHIDERAAFEAIAPAKDVDGVTMHSFAAMSFGLPGFVSCTPGGIMRLLEAYDVDLAGKHAVVVGRSAILGKPVGMLLLAKDATVTYCHSRTADLSAMVREADVVVAAVGRPRLIRGEDIKPGAVVIDAGYNPGNVGDVDFDAVLTRARLITPVPGGVGPMTIAVLLEQTVDAAANQLGVQQ</sequence>
<organism>
    <name type="scientific">Streptomyces avermitilis (strain ATCC 31267 / DSM 46492 / JCM 5070 / NBRC 14893 / NCIMB 12804 / NRRL 8165 / MA-4680)</name>
    <dbReference type="NCBI Taxonomy" id="227882"/>
    <lineage>
        <taxon>Bacteria</taxon>
        <taxon>Bacillati</taxon>
        <taxon>Actinomycetota</taxon>
        <taxon>Actinomycetes</taxon>
        <taxon>Kitasatosporales</taxon>
        <taxon>Streptomycetaceae</taxon>
        <taxon>Streptomyces</taxon>
    </lineage>
</organism>
<comment type="function">
    <text evidence="1">Catalyzes the oxidation of 5,10-methylenetetrahydrofolate to 5,10-methenyltetrahydrofolate and then the hydrolysis of 5,10-methenyltetrahydrofolate to 10-formyltetrahydrofolate.</text>
</comment>
<comment type="catalytic activity">
    <reaction evidence="1">
        <text>(6R)-5,10-methylene-5,6,7,8-tetrahydrofolate + NADP(+) = (6R)-5,10-methenyltetrahydrofolate + NADPH</text>
        <dbReference type="Rhea" id="RHEA:22812"/>
        <dbReference type="ChEBI" id="CHEBI:15636"/>
        <dbReference type="ChEBI" id="CHEBI:57455"/>
        <dbReference type="ChEBI" id="CHEBI:57783"/>
        <dbReference type="ChEBI" id="CHEBI:58349"/>
        <dbReference type="EC" id="1.5.1.5"/>
    </reaction>
</comment>
<comment type="catalytic activity">
    <reaction evidence="1">
        <text>(6R)-5,10-methenyltetrahydrofolate + H2O = (6R)-10-formyltetrahydrofolate + H(+)</text>
        <dbReference type="Rhea" id="RHEA:23700"/>
        <dbReference type="ChEBI" id="CHEBI:15377"/>
        <dbReference type="ChEBI" id="CHEBI:15378"/>
        <dbReference type="ChEBI" id="CHEBI:57455"/>
        <dbReference type="ChEBI" id="CHEBI:195366"/>
        <dbReference type="EC" id="3.5.4.9"/>
    </reaction>
</comment>
<comment type="pathway">
    <text evidence="1">One-carbon metabolism; tetrahydrofolate interconversion.</text>
</comment>
<comment type="subunit">
    <text evidence="1">Homodimer.</text>
</comment>
<comment type="similarity">
    <text evidence="1">Belongs to the tetrahydrofolate dehydrogenase/cyclohydrolase family.</text>
</comment>
<evidence type="ECO:0000255" key="1">
    <source>
        <dbReference type="HAMAP-Rule" id="MF_01576"/>
    </source>
</evidence>
<reference key="1">
    <citation type="journal article" date="2001" name="Proc. Natl. Acad. Sci. U.S.A.">
        <title>Genome sequence of an industrial microorganism Streptomyces avermitilis: deducing the ability of producing secondary metabolites.</title>
        <authorList>
            <person name="Omura S."/>
            <person name="Ikeda H."/>
            <person name="Ishikawa J."/>
            <person name="Hanamoto A."/>
            <person name="Takahashi C."/>
            <person name="Shinose M."/>
            <person name="Takahashi Y."/>
            <person name="Horikawa H."/>
            <person name="Nakazawa H."/>
            <person name="Osonoe T."/>
            <person name="Kikuchi H."/>
            <person name="Shiba T."/>
            <person name="Sakaki Y."/>
            <person name="Hattori M."/>
        </authorList>
    </citation>
    <scope>NUCLEOTIDE SEQUENCE [LARGE SCALE GENOMIC DNA]</scope>
    <source>
        <strain>ATCC 31267 / DSM 46492 / JCM 5070 / NBRC 14893 / NCIMB 12804 / NRRL 8165 / MA-4680</strain>
    </source>
</reference>
<reference key="2">
    <citation type="journal article" date="2003" name="Nat. Biotechnol.">
        <title>Complete genome sequence and comparative analysis of the industrial microorganism Streptomyces avermitilis.</title>
        <authorList>
            <person name="Ikeda H."/>
            <person name="Ishikawa J."/>
            <person name="Hanamoto A."/>
            <person name="Shinose M."/>
            <person name="Kikuchi H."/>
            <person name="Shiba T."/>
            <person name="Sakaki Y."/>
            <person name="Hattori M."/>
            <person name="Omura S."/>
        </authorList>
    </citation>
    <scope>NUCLEOTIDE SEQUENCE [LARGE SCALE GENOMIC DNA]</scope>
    <source>
        <strain>ATCC 31267 / DSM 46492 / JCM 5070 / NBRC 14893 / NCIMB 12804 / NRRL 8165 / MA-4680</strain>
    </source>
</reference>
<protein>
    <recommendedName>
        <fullName evidence="1">Bifunctional protein FolD 1</fullName>
    </recommendedName>
    <domain>
        <recommendedName>
            <fullName evidence="1">Methylenetetrahydrofolate dehydrogenase</fullName>
            <ecNumber evidence="1">1.5.1.5</ecNumber>
        </recommendedName>
    </domain>
    <domain>
        <recommendedName>
            <fullName evidence="1">Methenyltetrahydrofolate cyclohydrolase</fullName>
            <ecNumber evidence="1">3.5.4.9</ecNumber>
        </recommendedName>
    </domain>
</protein>
<feature type="chain" id="PRO_0000268525" description="Bifunctional protein FolD 1">
    <location>
        <begin position="1"/>
        <end position="287"/>
    </location>
</feature>
<feature type="binding site" evidence="1">
    <location>
        <begin position="170"/>
        <end position="172"/>
    </location>
    <ligand>
        <name>NADP(+)</name>
        <dbReference type="ChEBI" id="CHEBI:58349"/>
    </ligand>
</feature>
<feature type="binding site" evidence="1">
    <location>
        <position position="195"/>
    </location>
    <ligand>
        <name>NADP(+)</name>
        <dbReference type="ChEBI" id="CHEBI:58349"/>
    </ligand>
</feature>
<gene>
    <name evidence="1" type="primary">folD1</name>
    <name type="ordered locus">SAV_543</name>
</gene>
<proteinExistence type="inferred from homology"/>